<reference key="1">
    <citation type="journal article" date="2001" name="Nature">
        <title>Genome sequence of Yersinia pestis, the causative agent of plague.</title>
        <authorList>
            <person name="Parkhill J."/>
            <person name="Wren B.W."/>
            <person name="Thomson N.R."/>
            <person name="Titball R.W."/>
            <person name="Holden M.T.G."/>
            <person name="Prentice M.B."/>
            <person name="Sebaihia M."/>
            <person name="James K.D."/>
            <person name="Churcher C.M."/>
            <person name="Mungall K.L."/>
            <person name="Baker S."/>
            <person name="Basham D."/>
            <person name="Bentley S.D."/>
            <person name="Brooks K."/>
            <person name="Cerdeno-Tarraga A.-M."/>
            <person name="Chillingworth T."/>
            <person name="Cronin A."/>
            <person name="Davies R.M."/>
            <person name="Davis P."/>
            <person name="Dougan G."/>
            <person name="Feltwell T."/>
            <person name="Hamlin N."/>
            <person name="Holroyd S."/>
            <person name="Jagels K."/>
            <person name="Karlyshev A.V."/>
            <person name="Leather S."/>
            <person name="Moule S."/>
            <person name="Oyston P.C.F."/>
            <person name="Quail M.A."/>
            <person name="Rutherford K.M."/>
            <person name="Simmonds M."/>
            <person name="Skelton J."/>
            <person name="Stevens K."/>
            <person name="Whitehead S."/>
            <person name="Barrell B.G."/>
        </authorList>
    </citation>
    <scope>NUCLEOTIDE SEQUENCE [LARGE SCALE GENOMIC DNA]</scope>
    <source>
        <strain>CO-92 / Biovar Orientalis</strain>
    </source>
</reference>
<reference key="2">
    <citation type="journal article" date="2002" name="J. Bacteriol.">
        <title>Genome sequence of Yersinia pestis KIM.</title>
        <authorList>
            <person name="Deng W."/>
            <person name="Burland V."/>
            <person name="Plunkett G. III"/>
            <person name="Boutin A."/>
            <person name="Mayhew G.F."/>
            <person name="Liss P."/>
            <person name="Perna N.T."/>
            <person name="Rose D.J."/>
            <person name="Mau B."/>
            <person name="Zhou S."/>
            <person name="Schwartz D.C."/>
            <person name="Fetherston J.D."/>
            <person name="Lindler L.E."/>
            <person name="Brubaker R.R."/>
            <person name="Plano G.V."/>
            <person name="Straley S.C."/>
            <person name="McDonough K.A."/>
            <person name="Nilles M.L."/>
            <person name="Matson J.S."/>
            <person name="Blattner F.R."/>
            <person name="Perry R.D."/>
        </authorList>
    </citation>
    <scope>NUCLEOTIDE SEQUENCE [LARGE SCALE GENOMIC DNA]</scope>
    <source>
        <strain>KIM10+ / Biovar Mediaevalis</strain>
    </source>
</reference>
<reference key="3">
    <citation type="journal article" date="2004" name="DNA Res.">
        <title>Complete genome sequence of Yersinia pestis strain 91001, an isolate avirulent to humans.</title>
        <authorList>
            <person name="Song Y."/>
            <person name="Tong Z."/>
            <person name="Wang J."/>
            <person name="Wang L."/>
            <person name="Guo Z."/>
            <person name="Han Y."/>
            <person name="Zhang J."/>
            <person name="Pei D."/>
            <person name="Zhou D."/>
            <person name="Qin H."/>
            <person name="Pang X."/>
            <person name="Han Y."/>
            <person name="Zhai J."/>
            <person name="Li M."/>
            <person name="Cui B."/>
            <person name="Qi Z."/>
            <person name="Jin L."/>
            <person name="Dai R."/>
            <person name="Chen F."/>
            <person name="Li S."/>
            <person name="Ye C."/>
            <person name="Du Z."/>
            <person name="Lin W."/>
            <person name="Wang J."/>
            <person name="Yu J."/>
            <person name="Yang H."/>
            <person name="Wang J."/>
            <person name="Huang P."/>
            <person name="Yang R."/>
        </authorList>
    </citation>
    <scope>NUCLEOTIDE SEQUENCE [LARGE SCALE GENOMIC DNA]</scope>
    <source>
        <strain>91001 / Biovar Mediaevalis</strain>
    </source>
</reference>
<keyword id="KW-0067">ATP-binding</keyword>
<keyword id="KW-0119">Carbohydrate metabolism</keyword>
<keyword id="KW-0320">Glycogen biosynthesis</keyword>
<keyword id="KW-0321">Glycogen metabolism</keyword>
<keyword id="KW-0547">Nucleotide-binding</keyword>
<keyword id="KW-0548">Nucleotidyltransferase</keyword>
<keyword id="KW-1185">Reference proteome</keyword>
<keyword id="KW-0808">Transferase</keyword>
<dbReference type="EC" id="2.7.7.27" evidence="1"/>
<dbReference type="EMBL" id="AL590842">
    <property type="protein sequence ID" value="CAL22521.1"/>
    <property type="molecule type" value="Genomic_DNA"/>
</dbReference>
<dbReference type="EMBL" id="AE009952">
    <property type="protein sequence ID" value="AAM87433.1"/>
    <property type="molecule type" value="Genomic_DNA"/>
</dbReference>
<dbReference type="EMBL" id="AE017042">
    <property type="protein sequence ID" value="AAS63467.1"/>
    <property type="molecule type" value="Genomic_DNA"/>
</dbReference>
<dbReference type="PIR" id="AF0479">
    <property type="entry name" value="AF0479"/>
</dbReference>
<dbReference type="RefSeq" id="YP_002348811.1">
    <property type="nucleotide sequence ID" value="NC_003143.1"/>
</dbReference>
<dbReference type="SMR" id="Q8ZA77"/>
<dbReference type="IntAct" id="Q8ZA77">
    <property type="interactions" value="1"/>
</dbReference>
<dbReference type="STRING" id="214092.YPO3940"/>
<dbReference type="PaxDb" id="214092-YPO3940"/>
<dbReference type="DNASU" id="1148835"/>
<dbReference type="EnsemblBacteria" id="AAS63467">
    <property type="protein sequence ID" value="AAS63467"/>
    <property type="gene ID" value="YP_3302"/>
</dbReference>
<dbReference type="KEGG" id="ype:YPO3940"/>
<dbReference type="KEGG" id="ypk:y3888"/>
<dbReference type="KEGG" id="ypm:YP_3302"/>
<dbReference type="PATRIC" id="fig|214092.21.peg.4466"/>
<dbReference type="eggNOG" id="COG0448">
    <property type="taxonomic scope" value="Bacteria"/>
</dbReference>
<dbReference type="HOGENOM" id="CLU_029499_14_1_6"/>
<dbReference type="OMA" id="YPLTKMR"/>
<dbReference type="OrthoDB" id="9801810at2"/>
<dbReference type="UniPathway" id="UPA00164"/>
<dbReference type="Proteomes" id="UP000000815">
    <property type="component" value="Chromosome"/>
</dbReference>
<dbReference type="Proteomes" id="UP000001019">
    <property type="component" value="Chromosome"/>
</dbReference>
<dbReference type="Proteomes" id="UP000002490">
    <property type="component" value="Chromosome"/>
</dbReference>
<dbReference type="GO" id="GO:0005524">
    <property type="term" value="F:ATP binding"/>
    <property type="evidence" value="ECO:0007669"/>
    <property type="project" value="UniProtKB-KW"/>
</dbReference>
<dbReference type="GO" id="GO:0008878">
    <property type="term" value="F:glucose-1-phosphate adenylyltransferase activity"/>
    <property type="evidence" value="ECO:0007669"/>
    <property type="project" value="UniProtKB-UniRule"/>
</dbReference>
<dbReference type="GO" id="GO:0005978">
    <property type="term" value="P:glycogen biosynthetic process"/>
    <property type="evidence" value="ECO:0007669"/>
    <property type="project" value="UniProtKB-UniRule"/>
</dbReference>
<dbReference type="CDD" id="cd02508">
    <property type="entry name" value="ADP_Glucose_PP"/>
    <property type="match status" value="1"/>
</dbReference>
<dbReference type="CDD" id="cd04651">
    <property type="entry name" value="LbH_G1P_AT_C"/>
    <property type="match status" value="1"/>
</dbReference>
<dbReference type="FunFam" id="3.90.550.10:FF:000014">
    <property type="entry name" value="Glucose-1-phosphate adenylyltransferase"/>
    <property type="match status" value="1"/>
</dbReference>
<dbReference type="Gene3D" id="2.160.10.10">
    <property type="entry name" value="Hexapeptide repeat proteins"/>
    <property type="match status" value="1"/>
</dbReference>
<dbReference type="Gene3D" id="3.90.550.10">
    <property type="entry name" value="Spore Coat Polysaccharide Biosynthesis Protein SpsA, Chain A"/>
    <property type="match status" value="1"/>
</dbReference>
<dbReference type="HAMAP" id="MF_00624">
    <property type="entry name" value="GlgC"/>
    <property type="match status" value="1"/>
</dbReference>
<dbReference type="InterPro" id="IPR011831">
    <property type="entry name" value="ADP-Glc_PPase"/>
</dbReference>
<dbReference type="InterPro" id="IPR005836">
    <property type="entry name" value="ADP_Glu_pyroP_CS"/>
</dbReference>
<dbReference type="InterPro" id="IPR023049">
    <property type="entry name" value="GlgC_bac"/>
</dbReference>
<dbReference type="InterPro" id="IPR056818">
    <property type="entry name" value="GlmU/GlgC-like_hexapep"/>
</dbReference>
<dbReference type="InterPro" id="IPR005835">
    <property type="entry name" value="NTP_transferase_dom"/>
</dbReference>
<dbReference type="InterPro" id="IPR029044">
    <property type="entry name" value="Nucleotide-diphossugar_trans"/>
</dbReference>
<dbReference type="InterPro" id="IPR011004">
    <property type="entry name" value="Trimer_LpxA-like_sf"/>
</dbReference>
<dbReference type="NCBIfam" id="TIGR02091">
    <property type="entry name" value="glgC"/>
    <property type="match status" value="1"/>
</dbReference>
<dbReference type="NCBIfam" id="NF001947">
    <property type="entry name" value="PRK00725.1"/>
    <property type="match status" value="1"/>
</dbReference>
<dbReference type="NCBIfam" id="NF002023">
    <property type="entry name" value="PRK00844.1"/>
    <property type="match status" value="1"/>
</dbReference>
<dbReference type="PANTHER" id="PTHR43523:SF2">
    <property type="entry name" value="GLUCOSE-1-PHOSPHATE ADENYLYLTRANSFERASE"/>
    <property type="match status" value="1"/>
</dbReference>
<dbReference type="PANTHER" id="PTHR43523">
    <property type="entry name" value="GLUCOSE-1-PHOSPHATE ADENYLYLTRANSFERASE-RELATED"/>
    <property type="match status" value="1"/>
</dbReference>
<dbReference type="Pfam" id="PF24894">
    <property type="entry name" value="Hexapep_GlmU"/>
    <property type="match status" value="1"/>
</dbReference>
<dbReference type="Pfam" id="PF00483">
    <property type="entry name" value="NTP_transferase"/>
    <property type="match status" value="1"/>
</dbReference>
<dbReference type="SUPFAM" id="SSF53448">
    <property type="entry name" value="Nucleotide-diphospho-sugar transferases"/>
    <property type="match status" value="1"/>
</dbReference>
<dbReference type="SUPFAM" id="SSF51161">
    <property type="entry name" value="Trimeric LpxA-like enzymes"/>
    <property type="match status" value="1"/>
</dbReference>
<dbReference type="PROSITE" id="PS00808">
    <property type="entry name" value="ADP_GLC_PYROPHOSPH_1"/>
    <property type="match status" value="1"/>
</dbReference>
<dbReference type="PROSITE" id="PS00809">
    <property type="entry name" value="ADP_GLC_PYROPHOSPH_2"/>
    <property type="match status" value="1"/>
</dbReference>
<dbReference type="PROSITE" id="PS00810">
    <property type="entry name" value="ADP_GLC_PYROPHOSPH_3"/>
    <property type="match status" value="1"/>
</dbReference>
<gene>
    <name evidence="1" type="primary">glgC</name>
    <name type="ordered locus">YPO3940</name>
    <name type="ordered locus">y3888</name>
    <name type="ordered locus">YP_3302</name>
</gene>
<accession>Q8ZA77</accession>
<accession>Q0WA77</accession>
<sequence>MVRFESTDSLMLARQLPNKTVALILAGGRGSRLKDLTATRAKPAVHFGGKFRIIDFALSNCLNSGVRRIGVITQYQSHTLVQHIQRGWSFLNEEMNEFVDLLPAQQRLSTEQWYKGTADAVCQNLDIIRRYDAEYIVILAGDHIYKMDYSRMLLDHVEKGAECTVACIPVPISEGSEFGIMEVTADYQITAFYEKPANPPPIPGDPSNALASMGIYIFNADYLFKLLEEDNNTPGSSHDFGKDIIPQLTARKVVWAHPFDLSCVTSNAELPPYWRDVGTLDAYWRANLDLASVTPELDMYDRAWPIRTHMEPLPPAKFVQDRSGSHGMTMNSLVSGGCIVSGSVVVHSVLFPRVRVNSFCTIDSSLLLPDVHVGRSCRLRRCIIDRACHIPEGMVIGENADEDSARFYRSEGGGGVSDSGYAGKVRGKIEPLGFLFVRLDLLIRLSLLIRLNLFIRMNLLIILTLFFKLASIQASH</sequence>
<feature type="chain" id="PRO_0000195352" description="Glucose-1-phosphate adenylyltransferase">
    <location>
        <begin position="1"/>
        <end position="476"/>
    </location>
</feature>
<feature type="binding site" evidence="1">
    <location>
        <position position="114"/>
    </location>
    <ligand>
        <name>alpha-D-glucose 1-phosphate</name>
        <dbReference type="ChEBI" id="CHEBI:58601"/>
    </ligand>
</feature>
<feature type="binding site" evidence="1">
    <location>
        <position position="179"/>
    </location>
    <ligand>
        <name>alpha-D-glucose 1-phosphate</name>
        <dbReference type="ChEBI" id="CHEBI:58601"/>
    </ligand>
</feature>
<feature type="binding site" evidence="1">
    <location>
        <begin position="194"/>
        <end position="195"/>
    </location>
    <ligand>
        <name>alpha-D-glucose 1-phosphate</name>
        <dbReference type="ChEBI" id="CHEBI:58601"/>
    </ligand>
</feature>
<feature type="binding site" evidence="1">
    <location>
        <position position="212"/>
    </location>
    <ligand>
        <name>alpha-D-glucose 1-phosphate</name>
        <dbReference type="ChEBI" id="CHEBI:58601"/>
    </ligand>
</feature>
<comment type="function">
    <text evidence="1">Involved in the biosynthesis of ADP-glucose, a building block required for the elongation reactions to produce glycogen. Catalyzes the reaction between ATP and alpha-D-glucose 1-phosphate (G1P) to produce pyrophosphate and ADP-Glc.</text>
</comment>
<comment type="catalytic activity">
    <reaction evidence="1">
        <text>alpha-D-glucose 1-phosphate + ATP + H(+) = ADP-alpha-D-glucose + diphosphate</text>
        <dbReference type="Rhea" id="RHEA:12120"/>
        <dbReference type="ChEBI" id="CHEBI:15378"/>
        <dbReference type="ChEBI" id="CHEBI:30616"/>
        <dbReference type="ChEBI" id="CHEBI:33019"/>
        <dbReference type="ChEBI" id="CHEBI:57498"/>
        <dbReference type="ChEBI" id="CHEBI:58601"/>
        <dbReference type="EC" id="2.7.7.27"/>
    </reaction>
</comment>
<comment type="pathway">
    <text evidence="1">Glycan biosynthesis; glycogen biosynthesis.</text>
</comment>
<comment type="subunit">
    <text evidence="1">Homotetramer.</text>
</comment>
<comment type="similarity">
    <text evidence="1">Belongs to the bacterial/plant glucose-1-phosphate adenylyltransferase family.</text>
</comment>
<evidence type="ECO:0000255" key="1">
    <source>
        <dbReference type="HAMAP-Rule" id="MF_00624"/>
    </source>
</evidence>
<proteinExistence type="inferred from homology"/>
<protein>
    <recommendedName>
        <fullName evidence="1">Glucose-1-phosphate adenylyltransferase</fullName>
        <ecNumber evidence="1">2.7.7.27</ecNumber>
    </recommendedName>
    <alternativeName>
        <fullName evidence="1">ADP-glucose pyrophosphorylase</fullName>
        <shortName evidence="1">ADPGlc PPase</shortName>
    </alternativeName>
    <alternativeName>
        <fullName evidence="1">ADP-glucose synthase</fullName>
    </alternativeName>
</protein>
<name>GLGC_YERPE</name>
<organism>
    <name type="scientific">Yersinia pestis</name>
    <dbReference type="NCBI Taxonomy" id="632"/>
    <lineage>
        <taxon>Bacteria</taxon>
        <taxon>Pseudomonadati</taxon>
        <taxon>Pseudomonadota</taxon>
        <taxon>Gammaproteobacteria</taxon>
        <taxon>Enterobacterales</taxon>
        <taxon>Yersiniaceae</taxon>
        <taxon>Yersinia</taxon>
    </lineage>
</organism>